<protein>
    <recommendedName>
        <fullName evidence="3 8">Palmitoyltransferase spe-10</fullName>
        <ecNumber evidence="3">2.3.1.225</ecNumber>
    </recommendedName>
    <alternativeName>
        <fullName evidence="10">Defective spermatogenesis protein 10</fullName>
    </alternativeName>
</protein>
<reference evidence="8" key="1">
    <citation type="journal article" date="2006" name="Genetics">
        <title>spe-10 encodes a DHHC-CRD zinc-finger membrane protein required for endoplasmic reticulum/Golgi membrane morphogenesis during Caenorhabditis elegans spermatogenesis.</title>
        <authorList>
            <person name="Gleason E.J."/>
            <person name="Lindsey W.C."/>
            <person name="Kroft T.L."/>
            <person name="Singson A.W."/>
            <person name="L'hernault S.W."/>
        </authorList>
    </citation>
    <scope>NUCLEOTIDE SEQUENCE [GENOMIC DNA / MRNA]</scope>
    <scope>FUNCTION</scope>
    <scope>SUBCELLULAR LOCATION</scope>
    <scope>TISSUE SPECIFICITY</scope>
    <scope>DEVELOPMENTAL STAGE</scope>
    <scope>DISRUPTION PHENOTYPE</scope>
    <scope>MUTAGENESIS OF VAL-31; HIS-169; VAL-222 AND GLY-302</scope>
</reference>
<reference evidence="9" key="2">
    <citation type="journal article" date="1998" name="Science">
        <title>Genome sequence of the nematode C. elegans: a platform for investigating biology.</title>
        <authorList>
            <consortium name="The C. elegans sequencing consortium"/>
        </authorList>
    </citation>
    <scope>NUCLEOTIDE SEQUENCE [LARGE SCALE GENOMIC DNA]</scope>
    <source>
        <strain evidence="9">Bristol N2</strain>
    </source>
</reference>
<reference evidence="8" key="3">
    <citation type="journal article" date="1989" name="Dev. Biol.">
        <title>Mutations that disrupt the morphogenesis and localization of a sperm-specific organelle in Caenorhabditis elegans.</title>
        <authorList>
            <person name="Shakes D.C."/>
            <person name="Ward S."/>
        </authorList>
    </citation>
    <scope>FUNCTION</scope>
    <scope>DISRUPTION PHENOTYPE</scope>
</reference>
<reference evidence="8" key="4">
    <citation type="journal article" date="1999" name="Neurobiol. Aging">
        <title>The spe-10 mutant has longer life and increased stress resistance.</title>
        <authorList>
            <person name="Cypser J.R."/>
            <person name="Johnson T.E."/>
        </authorList>
    </citation>
    <scope>DISRUPTION PHENOTYPE</scope>
</reference>
<name>ZDHCS_CAEEL</name>
<evidence type="ECO:0000255" key="1"/>
<evidence type="ECO:0000255" key="2">
    <source>
        <dbReference type="PROSITE-ProRule" id="PRU00067"/>
    </source>
</evidence>
<evidence type="ECO:0000255" key="3">
    <source>
        <dbReference type="RuleBase" id="RU079119"/>
    </source>
</evidence>
<evidence type="ECO:0000269" key="4">
    <source>
    </source>
</evidence>
<evidence type="ECO:0000269" key="5">
    <source>
    </source>
</evidence>
<evidence type="ECO:0000269" key="6">
    <source>
    </source>
</evidence>
<evidence type="ECO:0000303" key="7">
    <source>
    </source>
</evidence>
<evidence type="ECO:0000305" key="8"/>
<evidence type="ECO:0000312" key="9">
    <source>
        <dbReference type="Proteomes" id="UP000001940"/>
    </source>
</evidence>
<evidence type="ECO:0000312" key="10">
    <source>
        <dbReference type="WormBase" id="AC3.10"/>
    </source>
</evidence>
<dbReference type="EC" id="2.3.1.225" evidence="3"/>
<dbReference type="EMBL" id="Z71177">
    <property type="protein sequence ID" value="CAI46554.1"/>
    <property type="molecule type" value="Genomic_DNA"/>
</dbReference>
<dbReference type="RefSeq" id="NP_001021339.1">
    <property type="nucleotide sequence ID" value="NM_001026168.5"/>
</dbReference>
<dbReference type="SMR" id="Q5FC64"/>
<dbReference type="BioGRID" id="532832">
    <property type="interactions" value="8"/>
</dbReference>
<dbReference type="FunCoup" id="Q5FC64">
    <property type="interactions" value="62"/>
</dbReference>
<dbReference type="STRING" id="6239.AC3.10.1"/>
<dbReference type="PaxDb" id="6239-AC3.10"/>
<dbReference type="EnsemblMetazoa" id="AC3.10.1">
    <property type="protein sequence ID" value="AC3.10.1"/>
    <property type="gene ID" value="WBGene00004964"/>
</dbReference>
<dbReference type="EnsemblMetazoa" id="AC3.10.2">
    <property type="protein sequence ID" value="AC3.10.2"/>
    <property type="gene ID" value="WBGene00004964"/>
</dbReference>
<dbReference type="GeneID" id="3565514"/>
<dbReference type="KEGG" id="cel:CELE_AC3.10"/>
<dbReference type="UCSC" id="AC3.10">
    <property type="organism name" value="c. elegans"/>
</dbReference>
<dbReference type="AGR" id="WB:WBGene00004964"/>
<dbReference type="CTD" id="3565514"/>
<dbReference type="WormBase" id="AC3.10">
    <property type="protein sequence ID" value="CE37870"/>
    <property type="gene ID" value="WBGene00004964"/>
    <property type="gene designation" value="spe-10"/>
</dbReference>
<dbReference type="eggNOG" id="KOG1315">
    <property type="taxonomic scope" value="Eukaryota"/>
</dbReference>
<dbReference type="HOGENOM" id="CLU_027721_1_0_1"/>
<dbReference type="InParanoid" id="Q5FC64"/>
<dbReference type="OMA" id="RYCKTCW"/>
<dbReference type="OrthoDB" id="9909019at2759"/>
<dbReference type="PhylomeDB" id="Q5FC64"/>
<dbReference type="PRO" id="PR:Q5FC64"/>
<dbReference type="Proteomes" id="UP000001940">
    <property type="component" value="Chromosome V"/>
</dbReference>
<dbReference type="Bgee" id="WBGene00004964">
    <property type="expression patterns" value="Expressed in larva and 2 other cell types or tissues"/>
</dbReference>
<dbReference type="GO" id="GO:0005783">
    <property type="term" value="C:endoplasmic reticulum"/>
    <property type="evidence" value="ECO:0000318"/>
    <property type="project" value="GO_Central"/>
</dbReference>
<dbReference type="GO" id="GO:0005794">
    <property type="term" value="C:Golgi apparatus"/>
    <property type="evidence" value="ECO:0000318"/>
    <property type="project" value="GO_Central"/>
</dbReference>
<dbReference type="GO" id="GO:0016020">
    <property type="term" value="C:membrane"/>
    <property type="evidence" value="ECO:0007669"/>
    <property type="project" value="UniProtKB-SubCell"/>
</dbReference>
<dbReference type="GO" id="GO:0019706">
    <property type="term" value="F:protein-cysteine S-palmitoyltransferase activity"/>
    <property type="evidence" value="ECO:0000318"/>
    <property type="project" value="GO_Central"/>
</dbReference>
<dbReference type="GO" id="GO:0097723">
    <property type="term" value="P:amoeboid sperm motility"/>
    <property type="evidence" value="ECO:0000315"/>
    <property type="project" value="WormBase"/>
</dbReference>
<dbReference type="GO" id="GO:0061025">
    <property type="term" value="P:membrane fusion"/>
    <property type="evidence" value="ECO:0000315"/>
    <property type="project" value="WormBase"/>
</dbReference>
<dbReference type="GO" id="GO:0007097">
    <property type="term" value="P:nuclear migration"/>
    <property type="evidence" value="ECO:0000315"/>
    <property type="project" value="WormBase"/>
</dbReference>
<dbReference type="GO" id="GO:0045793">
    <property type="term" value="P:positive regulation of cell size"/>
    <property type="evidence" value="ECO:0000315"/>
    <property type="project" value="WormBase"/>
</dbReference>
<dbReference type="GO" id="GO:0006612">
    <property type="term" value="P:protein targeting to membrane"/>
    <property type="evidence" value="ECO:0000318"/>
    <property type="project" value="GO_Central"/>
</dbReference>
<dbReference type="GO" id="GO:0031268">
    <property type="term" value="P:pseudopodium organization"/>
    <property type="evidence" value="ECO:0000315"/>
    <property type="project" value="WormBase"/>
</dbReference>
<dbReference type="GO" id="GO:0007286">
    <property type="term" value="P:spermatid development"/>
    <property type="evidence" value="ECO:0000315"/>
    <property type="project" value="WormBase"/>
</dbReference>
<dbReference type="InterPro" id="IPR001594">
    <property type="entry name" value="Palmitoyltrfase_DHHC"/>
</dbReference>
<dbReference type="InterPro" id="IPR039859">
    <property type="entry name" value="PFA4/ZDH16/20/ERF2-like"/>
</dbReference>
<dbReference type="PANTHER" id="PTHR12246">
    <property type="entry name" value="PALMITOYLTRANSFERASE ZDHHC16"/>
    <property type="match status" value="1"/>
</dbReference>
<dbReference type="Pfam" id="PF01529">
    <property type="entry name" value="DHHC"/>
    <property type="match status" value="1"/>
</dbReference>
<dbReference type="PROSITE" id="PS50216">
    <property type="entry name" value="DHHC"/>
    <property type="match status" value="1"/>
</dbReference>
<proteinExistence type="evidence at protein level"/>
<gene>
    <name evidence="10" type="primary">spe-10</name>
    <name evidence="10" type="ORF">AC3.10</name>
</gene>
<keyword id="KW-0012">Acyltransferase</keyword>
<keyword id="KW-0221">Differentiation</keyword>
<keyword id="KW-0449">Lipoprotein</keyword>
<keyword id="KW-0472">Membrane</keyword>
<keyword id="KW-0564">Palmitate</keyword>
<keyword id="KW-1185">Reference proteome</keyword>
<keyword id="KW-0744">Spermatogenesis</keyword>
<keyword id="KW-0808">Transferase</keyword>
<keyword id="KW-0812">Transmembrane</keyword>
<keyword id="KW-1133">Transmembrane helix</keyword>
<comment type="function">
    <text evidence="5 6">Involved in spermatogenesis, specifically in the morphogenesis of fibrous body-membranous organelles (FB-MO), which are Golgi-derived organelles used for transporting sperm-specific components, in spermatocytes and in their localization into budding spermatids (PubMed:16143610, PubMed:2744235). Required for the proper formation of spermatids and spermatozoa (PubMed:2744235).</text>
</comment>
<comment type="catalytic activity">
    <reaction evidence="3">
        <text>L-cysteinyl-[protein] + hexadecanoyl-CoA = S-hexadecanoyl-L-cysteinyl-[protein] + CoA</text>
        <dbReference type="Rhea" id="RHEA:36683"/>
        <dbReference type="Rhea" id="RHEA-COMP:10131"/>
        <dbReference type="Rhea" id="RHEA-COMP:11032"/>
        <dbReference type="ChEBI" id="CHEBI:29950"/>
        <dbReference type="ChEBI" id="CHEBI:57287"/>
        <dbReference type="ChEBI" id="CHEBI:57379"/>
        <dbReference type="ChEBI" id="CHEBI:74151"/>
        <dbReference type="EC" id="2.3.1.225"/>
    </reaction>
</comment>
<comment type="subcellular location">
    <subcellularLocation>
        <location evidence="1">Membrane</location>
        <topology evidence="1">Multi-pass membrane protein</topology>
    </subcellularLocation>
    <text evidence="5">Mainly found in fibrous body-membranous organelles.</text>
</comment>
<comment type="tissue specificity">
    <text evidence="5">Expressed during spermatogenesis in budding and budded spermatids.</text>
</comment>
<comment type="developmental stage">
    <text evidence="5">Only expressed during spermatogenesis in adult males and in hermaphrodites in the larval stage 4.</text>
</comment>
<comment type="domain">
    <text evidence="3">The DHHC domain is required for palmitoyltransferase activity.</text>
</comment>
<comment type="disruption phenotype">
    <text evidence="4 5 6">Self-sterile phenotype which is slightly temperature sensitive (PubMed:16143610). In hermaphrodites the temperature sensitivity is restricted to the larval stage 4 when spermatogenesis takes place (PubMed:16143610). Premature disassembly of FB-MO before or while spermatids are budding from spermatocytes (PubMed:2744235). FB remain in spermatocytes whereas MO localize to spermatids but often fail to fuse with plasma membrane (PubMed:2744235). Resulting spermatids are usually smaller than normal and contain several or mislocalized nuclei (PubMed:16143610, PubMed:2744235). Fewer spermatozoa are generated and those that are have abnormally short pseudopods and are immotile (PubMed:2744235). The size of spermatocytes is unaffected (PubMed:2744235). Increased life span and resistance to UV and heat but not to oxidative stress induced by paraquat (PubMed:10638523). Normal production of fertile oocytes (PubMed:10638523).</text>
</comment>
<comment type="similarity">
    <text evidence="3">Belongs to the DHHC palmitoyltransferase family.</text>
</comment>
<feature type="chain" id="PRO_0000431241" description="Palmitoyltransferase spe-10">
    <location>
        <begin position="1"/>
        <end position="351"/>
    </location>
</feature>
<feature type="transmembrane region" description="Helical; Name=1" evidence="1">
    <location>
        <begin position="21"/>
        <end position="43"/>
    </location>
</feature>
<feature type="transmembrane region" description="Helical; Name=2" evidence="1">
    <location>
        <begin position="60"/>
        <end position="80"/>
    </location>
</feature>
<feature type="transmembrane region" description="Helical; Name=3" evidence="1">
    <location>
        <begin position="198"/>
        <end position="218"/>
    </location>
</feature>
<feature type="transmembrane region" description="Helical; Name=4" evidence="1">
    <location>
        <begin position="241"/>
        <end position="261"/>
    </location>
</feature>
<feature type="domain" description="DHHC" evidence="2">
    <location>
        <begin position="154"/>
        <end position="204"/>
    </location>
</feature>
<feature type="mutagenesis site" description="In eb106; defect in spermatogenesis. Temperature sensitive fertility defect." evidence="5 7">
    <original>V</original>
    <variation>E</variation>
    <location>
        <position position="31"/>
    </location>
</feature>
<feature type="mutagenesis site" description="In eb64; defect in spermatogenesis. Slightly temperature sensitive fertility defect. Does not affect spe-10 localization." evidence="5 7">
    <original>H</original>
    <variation>Y</variation>
    <location>
        <position position="169"/>
    </location>
</feature>
<feature type="mutagenesis site" description="In eb105; defect in spermatogenesis. Temperature sensitive fertility defect." evidence="5">
    <original>V</original>
    <variation>D</variation>
    <location>
        <position position="222"/>
    </location>
</feature>
<feature type="mutagenesis site" description="In eb118; defect in spermatogenesis. Temperature sensitive fertility defect." evidence="5">
    <original>G</original>
    <variation>E</variation>
    <location>
        <position position="302"/>
    </location>
</feature>
<organism evidence="9">
    <name type="scientific">Caenorhabditis elegans</name>
    <dbReference type="NCBI Taxonomy" id="6239"/>
    <lineage>
        <taxon>Eukaryota</taxon>
        <taxon>Metazoa</taxon>
        <taxon>Ecdysozoa</taxon>
        <taxon>Nematoda</taxon>
        <taxon>Chromadorea</taxon>
        <taxon>Rhabditida</taxon>
        <taxon>Rhabditina</taxon>
        <taxon>Rhabditomorpha</taxon>
        <taxon>Rhabditoidea</taxon>
        <taxon>Rhabditidae</taxon>
        <taxon>Peloderinae</taxon>
        <taxon>Caenorhabditis</taxon>
    </lineage>
</organism>
<accession>Q5FC64</accession>
<sequence>MSWYSKIYVAVREYRAKHKITGWILTRCLNVLLFIQLILLWWSLYMYVTVTIGYYVQSTIQATIYLIVGSFLFVMSMWSLAKTLFTRVGRVPERYRPSKELEDRLKAVTPMEKNRYVVEKSTPEQLAQQNTILEEMCTYCKVVVAECDQVGRLKYCYECGHIKPDRARHCSSCGKCCIKYDHHCPWINMCVTHVNYKYFLLYIIYTSFLVYWYLLTSLEGAVRYFINQQWTDELGKFLFYLFSFIVGGVFGYYPLGELIIFHYQLISLNETTVEQTKPALLRFDNAADYNMGKYNNFQSVFGWGLWLCPIDSSTQDGLHFDIRYVNTQQRNRFVRIEEEPSSTQSSQSSIQ</sequence>